<gene>
    <name type="primary">nhaA</name>
    <name type="ordered locus">RC1355</name>
</gene>
<sequence length="146" mass="16352">MVESGIHDTLCRAIIALFIPVNIKGEFNTSFKKLENLTRPFVNYFILPLFVFMNSGILLEYFAFKGICSNSILALIYGIIFGLFVGKQLGIMLFSYPFVKFKLCNLPSDTSWLKFYSIAILGGIGFTLSLFIGSILRLRAAALQTL</sequence>
<protein>
    <recommendedName>
        <fullName>Putative Na(+)/H(+) antiporter NhaA homolog</fullName>
    </recommendedName>
</protein>
<dbReference type="EMBL" id="AE006914">
    <property type="protein sequence ID" value="AAL03893.1"/>
    <property type="molecule type" value="Genomic_DNA"/>
</dbReference>
<dbReference type="PIR" id="C97869">
    <property type="entry name" value="C97869"/>
</dbReference>
<dbReference type="SMR" id="Q92FX2"/>
<dbReference type="KEGG" id="rco:RC1355"/>
<dbReference type="HOGENOM" id="CLU_080452_0_1_5"/>
<dbReference type="Proteomes" id="UP000000816">
    <property type="component" value="Chromosome"/>
</dbReference>
<dbReference type="GO" id="GO:0005886">
    <property type="term" value="C:plasma membrane"/>
    <property type="evidence" value="ECO:0007669"/>
    <property type="project" value="UniProtKB-SubCell"/>
</dbReference>
<dbReference type="GO" id="GO:0015385">
    <property type="term" value="F:sodium:proton antiporter activity"/>
    <property type="evidence" value="ECO:0007669"/>
    <property type="project" value="TreeGrafter"/>
</dbReference>
<dbReference type="GO" id="GO:0006885">
    <property type="term" value="P:regulation of pH"/>
    <property type="evidence" value="ECO:0007669"/>
    <property type="project" value="InterPro"/>
</dbReference>
<dbReference type="Gene3D" id="1.20.1530.10">
    <property type="entry name" value="Na+/H+ antiporter like domain"/>
    <property type="match status" value="1"/>
</dbReference>
<dbReference type="InterPro" id="IPR023171">
    <property type="entry name" value="Na/H_antiporter_dom_sf"/>
</dbReference>
<dbReference type="InterPro" id="IPR004670">
    <property type="entry name" value="NhaA"/>
</dbReference>
<dbReference type="PANTHER" id="PTHR30341:SF0">
    <property type="entry name" value="NA(+)_H(+) ANTIPORTER NHAA"/>
    <property type="match status" value="1"/>
</dbReference>
<dbReference type="PANTHER" id="PTHR30341">
    <property type="entry name" value="SODIUM ION/PROTON ANTIPORTER NHAA-RELATED"/>
    <property type="match status" value="1"/>
</dbReference>
<dbReference type="Pfam" id="PF06965">
    <property type="entry name" value="Na_H_antiport_1"/>
    <property type="match status" value="1"/>
</dbReference>
<name>NHAA_RICCN</name>
<accession>Q92FX2</accession>
<feature type="chain" id="PRO_0000334398" description="Putative Na(+)/H(+) antiporter NhaA homolog">
    <location>
        <begin position="1"/>
        <end position="146"/>
    </location>
</feature>
<feature type="transmembrane region" description="Helical" evidence="2">
    <location>
        <begin position="44"/>
        <end position="64"/>
    </location>
</feature>
<feature type="transmembrane region" description="Helical" evidence="2">
    <location>
        <begin position="72"/>
        <end position="92"/>
    </location>
</feature>
<feature type="transmembrane region" description="Helical" evidence="2">
    <location>
        <begin position="115"/>
        <end position="135"/>
    </location>
</feature>
<keyword id="KW-0997">Cell inner membrane</keyword>
<keyword id="KW-1003">Cell membrane</keyword>
<keyword id="KW-0472">Membrane</keyword>
<keyword id="KW-0812">Transmembrane</keyword>
<keyword id="KW-1133">Transmembrane helix</keyword>
<evidence type="ECO:0000250" key="1"/>
<evidence type="ECO:0000255" key="2"/>
<evidence type="ECO:0000305" key="3"/>
<reference key="1">
    <citation type="journal article" date="2001" name="Science">
        <title>Mechanisms of evolution in Rickettsia conorii and R. prowazekii.</title>
        <authorList>
            <person name="Ogata H."/>
            <person name="Audic S."/>
            <person name="Renesto-Audiffren P."/>
            <person name="Fournier P.-E."/>
            <person name="Barbe V."/>
            <person name="Samson D."/>
            <person name="Roux V."/>
            <person name="Cossart P."/>
            <person name="Weissenbach J."/>
            <person name="Claverie J.-M."/>
            <person name="Raoult D."/>
        </authorList>
    </citation>
    <scope>NUCLEOTIDE SEQUENCE [LARGE SCALE GENOMIC DNA]</scope>
    <source>
        <strain>ATCC VR-613 / Malish 7</strain>
    </source>
</reference>
<organism>
    <name type="scientific">Rickettsia conorii (strain ATCC VR-613 / Malish 7)</name>
    <dbReference type="NCBI Taxonomy" id="272944"/>
    <lineage>
        <taxon>Bacteria</taxon>
        <taxon>Pseudomonadati</taxon>
        <taxon>Pseudomonadota</taxon>
        <taxon>Alphaproteobacteria</taxon>
        <taxon>Rickettsiales</taxon>
        <taxon>Rickettsiaceae</taxon>
        <taxon>Rickettsieae</taxon>
        <taxon>Rickettsia</taxon>
        <taxon>spotted fever group</taxon>
    </lineage>
</organism>
<comment type="subcellular location">
    <subcellularLocation>
        <location evidence="1">Cell inner membrane</location>
        <topology evidence="1">Multi-pass membrane protein</topology>
    </subcellularLocation>
</comment>
<comment type="similarity">
    <text evidence="3">Belongs to the NhaA Na(+)/H(+) (TC 2.A.33) antiporter family.</text>
</comment>
<comment type="caution">
    <text evidence="3">Could be the product of a pseudogene. This sequence is shorter than orthologs.</text>
</comment>
<proteinExistence type="uncertain"/>